<feature type="signal peptide" evidence="1">
    <location>
        <begin position="1"/>
        <end position="25"/>
    </location>
</feature>
<feature type="chain" id="PRO_0000014062" description="Uncharacterized lipoprotein MPN_467">
    <location>
        <begin position="26"/>
        <end position="101"/>
    </location>
</feature>
<feature type="lipid moiety-binding region" description="N-palmitoyl cysteine" evidence="1">
    <location>
        <position position="26"/>
    </location>
</feature>
<feature type="lipid moiety-binding region" description="S-diacylglycerol cysteine" evidence="1">
    <location>
        <position position="26"/>
    </location>
</feature>
<organism>
    <name type="scientific">Mycoplasma pneumoniae (strain ATCC 29342 / M129 / Subtype 1)</name>
    <name type="common">Mycoplasmoides pneumoniae</name>
    <dbReference type="NCBI Taxonomy" id="272634"/>
    <lineage>
        <taxon>Bacteria</taxon>
        <taxon>Bacillati</taxon>
        <taxon>Mycoplasmatota</taxon>
        <taxon>Mycoplasmoidales</taxon>
        <taxon>Mycoplasmoidaceae</taxon>
        <taxon>Mycoplasmoides</taxon>
    </lineage>
</organism>
<name>Y467_MYCPN</name>
<keyword id="KW-1003">Cell membrane</keyword>
<keyword id="KW-0449">Lipoprotein</keyword>
<keyword id="KW-0472">Membrane</keyword>
<keyword id="KW-0564">Palmitate</keyword>
<keyword id="KW-1185">Reference proteome</keyword>
<keyword id="KW-0732">Signal</keyword>
<accession>P75316</accession>
<protein>
    <recommendedName>
        <fullName>Uncharacterized lipoprotein MPN_467</fullName>
    </recommendedName>
</protein>
<gene>
    <name type="ordered locus">MPN_467</name>
    <name type="ORF">MP374</name>
    <name type="ORF">P01_orf101</name>
</gene>
<proteinExistence type="inferred from homology"/>
<comment type="subcellular location">
    <subcellularLocation>
        <location evidence="1">Cell membrane</location>
        <topology evidence="1">Lipid-anchor</topology>
    </subcellularLocation>
</comment>
<comment type="similarity">
    <text evidence="2">Belongs to the MG439/MG440 family.</text>
</comment>
<evidence type="ECO:0000255" key="1">
    <source>
        <dbReference type="PROSITE-ProRule" id="PRU00303"/>
    </source>
</evidence>
<evidence type="ECO:0000305" key="2"/>
<reference key="1">
    <citation type="journal article" date="1996" name="Nucleic Acids Res.">
        <title>Complete sequence analysis of the genome of the bacterium Mycoplasma pneumoniae.</title>
        <authorList>
            <person name="Himmelreich R."/>
            <person name="Hilbert H."/>
            <person name="Plagens H."/>
            <person name="Pirkl E."/>
            <person name="Li B.-C."/>
            <person name="Herrmann R."/>
        </authorList>
    </citation>
    <scope>NUCLEOTIDE SEQUENCE [LARGE SCALE GENOMIC DNA]</scope>
    <source>
        <strain>ATCC 29342 / M129 / Subtype 1</strain>
    </source>
</reference>
<sequence length="101" mass="11349">MRKKRLLSRISFSSLFLLCGTLLSACTGIQADLRNLIKETTGKDIDLSKAIKTKEGKKNIIASLKKSYEVNPRDTTKLLLDAWKQSFEEGKLGIPDFDLTM</sequence>
<dbReference type="EMBL" id="U00089">
    <property type="protein sequence ID" value="AAB96022.1"/>
    <property type="molecule type" value="Genomic_DNA"/>
</dbReference>
<dbReference type="PIR" id="S73700">
    <property type="entry name" value="S73700"/>
</dbReference>
<dbReference type="STRING" id="272634.MPN_467"/>
<dbReference type="EnsemblBacteria" id="AAB96022">
    <property type="protein sequence ID" value="AAB96022"/>
    <property type="gene ID" value="MPN_467"/>
</dbReference>
<dbReference type="KEGG" id="mpn:MPN_467"/>
<dbReference type="HOGENOM" id="CLU_159944_0_0_14"/>
<dbReference type="Proteomes" id="UP000000808">
    <property type="component" value="Chromosome"/>
</dbReference>
<dbReference type="GO" id="GO:0005886">
    <property type="term" value="C:plasma membrane"/>
    <property type="evidence" value="ECO:0007669"/>
    <property type="project" value="UniProtKB-SubCell"/>
</dbReference>
<dbReference type="InterPro" id="IPR001595">
    <property type="entry name" value="Lipoprotein_3"/>
</dbReference>
<dbReference type="Pfam" id="PF00938">
    <property type="entry name" value="Lipoprotein_3"/>
    <property type="match status" value="1"/>
</dbReference>
<dbReference type="PROSITE" id="PS51257">
    <property type="entry name" value="PROKAR_LIPOPROTEIN"/>
    <property type="match status" value="1"/>
</dbReference>